<protein>
    <recommendedName>
        <fullName evidence="1">Large ribosomal subunit protein uL24</fullName>
    </recommendedName>
    <alternativeName>
        <fullName evidence="2">50S ribosomal protein L24</fullName>
    </alternativeName>
</protein>
<gene>
    <name evidence="1" type="primary">rplX</name>
    <name type="ordered locus">SPO0496</name>
</gene>
<keyword id="KW-1185">Reference proteome</keyword>
<keyword id="KW-0687">Ribonucleoprotein</keyword>
<keyword id="KW-0689">Ribosomal protein</keyword>
<keyword id="KW-0694">RNA-binding</keyword>
<keyword id="KW-0699">rRNA-binding</keyword>
<evidence type="ECO:0000255" key="1">
    <source>
        <dbReference type="HAMAP-Rule" id="MF_01326"/>
    </source>
</evidence>
<evidence type="ECO:0000305" key="2"/>
<feature type="chain" id="PRO_0000241663" description="Large ribosomal subunit protein uL24">
    <location>
        <begin position="1"/>
        <end position="103"/>
    </location>
</feature>
<name>RL24_RUEPO</name>
<comment type="function">
    <text evidence="1">One of two assembly initiator proteins, it binds directly to the 5'-end of the 23S rRNA, where it nucleates assembly of the 50S subunit.</text>
</comment>
<comment type="function">
    <text evidence="1">One of the proteins that surrounds the polypeptide exit tunnel on the outside of the subunit.</text>
</comment>
<comment type="subunit">
    <text evidence="1">Part of the 50S ribosomal subunit.</text>
</comment>
<comment type="similarity">
    <text evidence="1">Belongs to the universal ribosomal protein uL24 family.</text>
</comment>
<accession>Q5LW47</accession>
<organism>
    <name type="scientific">Ruegeria pomeroyi (strain ATCC 700808 / DSM 15171 / DSS-3)</name>
    <name type="common">Silicibacter pomeroyi</name>
    <dbReference type="NCBI Taxonomy" id="246200"/>
    <lineage>
        <taxon>Bacteria</taxon>
        <taxon>Pseudomonadati</taxon>
        <taxon>Pseudomonadota</taxon>
        <taxon>Alphaproteobacteria</taxon>
        <taxon>Rhodobacterales</taxon>
        <taxon>Roseobacteraceae</taxon>
        <taxon>Ruegeria</taxon>
    </lineage>
</organism>
<reference key="1">
    <citation type="journal article" date="2004" name="Nature">
        <title>Genome sequence of Silicibacter pomeroyi reveals adaptations to the marine environment.</title>
        <authorList>
            <person name="Moran M.A."/>
            <person name="Buchan A."/>
            <person name="Gonzalez J.M."/>
            <person name="Heidelberg J.F."/>
            <person name="Whitman W.B."/>
            <person name="Kiene R.P."/>
            <person name="Henriksen J.R."/>
            <person name="King G.M."/>
            <person name="Belas R."/>
            <person name="Fuqua C."/>
            <person name="Brinkac L.M."/>
            <person name="Lewis M."/>
            <person name="Johri S."/>
            <person name="Weaver B."/>
            <person name="Pai G."/>
            <person name="Eisen J.A."/>
            <person name="Rahe E."/>
            <person name="Sheldon W.M."/>
            <person name="Ye W."/>
            <person name="Miller T.R."/>
            <person name="Carlton J."/>
            <person name="Rasko D.A."/>
            <person name="Paulsen I.T."/>
            <person name="Ren Q."/>
            <person name="Daugherty S.C."/>
            <person name="DeBoy R.T."/>
            <person name="Dodson R.J."/>
            <person name="Durkin A.S."/>
            <person name="Madupu R."/>
            <person name="Nelson W.C."/>
            <person name="Sullivan S.A."/>
            <person name="Rosovitz M.J."/>
            <person name="Haft D.H."/>
            <person name="Selengut J."/>
            <person name="Ward N."/>
        </authorList>
    </citation>
    <scope>NUCLEOTIDE SEQUENCE [LARGE SCALE GENOMIC DNA]</scope>
    <source>
        <strain>ATCC 700808 / DSM 15171 / DSS-3</strain>
    </source>
</reference>
<reference key="2">
    <citation type="journal article" date="2014" name="Stand. Genomic Sci.">
        <title>An updated genome annotation for the model marine bacterium Ruegeria pomeroyi DSS-3.</title>
        <authorList>
            <person name="Rivers A.R."/>
            <person name="Smith C.B."/>
            <person name="Moran M.A."/>
        </authorList>
    </citation>
    <scope>GENOME REANNOTATION</scope>
    <source>
        <strain>ATCC 700808 / DSM 15171 / DSS-3</strain>
    </source>
</reference>
<dbReference type="EMBL" id="CP000031">
    <property type="protein sequence ID" value="AAV93813.1"/>
    <property type="molecule type" value="Genomic_DNA"/>
</dbReference>
<dbReference type="RefSeq" id="WP_011046255.1">
    <property type="nucleotide sequence ID" value="NC_003911.12"/>
</dbReference>
<dbReference type="SMR" id="Q5LW47"/>
<dbReference type="STRING" id="246200.SPO0496"/>
<dbReference type="PaxDb" id="246200-SPO0496"/>
<dbReference type="KEGG" id="sil:SPO0496"/>
<dbReference type="eggNOG" id="COG0198">
    <property type="taxonomic scope" value="Bacteria"/>
</dbReference>
<dbReference type="HOGENOM" id="CLU_093315_2_2_5"/>
<dbReference type="OrthoDB" id="9807419at2"/>
<dbReference type="Proteomes" id="UP000001023">
    <property type="component" value="Chromosome"/>
</dbReference>
<dbReference type="GO" id="GO:1990904">
    <property type="term" value="C:ribonucleoprotein complex"/>
    <property type="evidence" value="ECO:0007669"/>
    <property type="project" value="UniProtKB-KW"/>
</dbReference>
<dbReference type="GO" id="GO:0005840">
    <property type="term" value="C:ribosome"/>
    <property type="evidence" value="ECO:0007669"/>
    <property type="project" value="UniProtKB-KW"/>
</dbReference>
<dbReference type="GO" id="GO:0019843">
    <property type="term" value="F:rRNA binding"/>
    <property type="evidence" value="ECO:0007669"/>
    <property type="project" value="UniProtKB-UniRule"/>
</dbReference>
<dbReference type="GO" id="GO:0003735">
    <property type="term" value="F:structural constituent of ribosome"/>
    <property type="evidence" value="ECO:0007669"/>
    <property type="project" value="InterPro"/>
</dbReference>
<dbReference type="GO" id="GO:0006412">
    <property type="term" value="P:translation"/>
    <property type="evidence" value="ECO:0007669"/>
    <property type="project" value="UniProtKB-UniRule"/>
</dbReference>
<dbReference type="CDD" id="cd06089">
    <property type="entry name" value="KOW_RPL26"/>
    <property type="match status" value="1"/>
</dbReference>
<dbReference type="Gene3D" id="2.30.30.30">
    <property type="match status" value="1"/>
</dbReference>
<dbReference type="HAMAP" id="MF_01326_B">
    <property type="entry name" value="Ribosomal_uL24_B"/>
    <property type="match status" value="1"/>
</dbReference>
<dbReference type="InterPro" id="IPR005824">
    <property type="entry name" value="KOW"/>
</dbReference>
<dbReference type="InterPro" id="IPR014722">
    <property type="entry name" value="Rib_uL2_dom2"/>
</dbReference>
<dbReference type="InterPro" id="IPR003256">
    <property type="entry name" value="Ribosomal_uL24"/>
</dbReference>
<dbReference type="InterPro" id="IPR005825">
    <property type="entry name" value="Ribosomal_uL24_CS"/>
</dbReference>
<dbReference type="InterPro" id="IPR041988">
    <property type="entry name" value="Ribosomal_uL24_KOW"/>
</dbReference>
<dbReference type="InterPro" id="IPR008991">
    <property type="entry name" value="Translation_prot_SH3-like_sf"/>
</dbReference>
<dbReference type="NCBIfam" id="TIGR01079">
    <property type="entry name" value="rplX_bact"/>
    <property type="match status" value="1"/>
</dbReference>
<dbReference type="PANTHER" id="PTHR12903">
    <property type="entry name" value="MITOCHONDRIAL RIBOSOMAL PROTEIN L24"/>
    <property type="match status" value="1"/>
</dbReference>
<dbReference type="Pfam" id="PF00467">
    <property type="entry name" value="KOW"/>
    <property type="match status" value="1"/>
</dbReference>
<dbReference type="Pfam" id="PF17136">
    <property type="entry name" value="ribosomal_L24"/>
    <property type="match status" value="1"/>
</dbReference>
<dbReference type="SMART" id="SM00739">
    <property type="entry name" value="KOW"/>
    <property type="match status" value="1"/>
</dbReference>
<dbReference type="SUPFAM" id="SSF50104">
    <property type="entry name" value="Translation proteins SH3-like domain"/>
    <property type="match status" value="1"/>
</dbReference>
<dbReference type="PROSITE" id="PS01108">
    <property type="entry name" value="RIBOSOMAL_L24"/>
    <property type="match status" value="1"/>
</dbReference>
<sequence length="103" mass="10911">MAAKLRKGDKVVVLAGKDKGKEGTITSVDPKAGKAVVDGVNIAIRHTRQTQTSQGGRLPKALPIDLSNLALLDKNGKATRVGFRMEGDKKVRFAKTTGDVIDA</sequence>
<proteinExistence type="inferred from homology"/>